<organism>
    <name type="scientific">Haemophilus influenzae (strain ATCC 51907 / DSM 11121 / KW20 / Rd)</name>
    <dbReference type="NCBI Taxonomy" id="71421"/>
    <lineage>
        <taxon>Bacteria</taxon>
        <taxon>Pseudomonadati</taxon>
        <taxon>Pseudomonadota</taxon>
        <taxon>Gammaproteobacteria</taxon>
        <taxon>Pasteurellales</taxon>
        <taxon>Pasteurellaceae</taxon>
        <taxon>Haemophilus</taxon>
    </lineage>
</organism>
<accession>O05072</accession>
<dbReference type="EMBL" id="L42023">
    <property type="protein sequence ID" value="AAC23153.1"/>
    <property type="molecule type" value="Genomic_DNA"/>
</dbReference>
<dbReference type="PIR" id="H64126">
    <property type="entry name" value="H64126"/>
</dbReference>
<dbReference type="RefSeq" id="NP_439653.1">
    <property type="nucleotide sequence ID" value="NC_000907.1"/>
</dbReference>
<dbReference type="STRING" id="71421.HI_1503"/>
<dbReference type="EnsemblBacteria" id="AAC23153">
    <property type="protein sequence ID" value="AAC23153"/>
    <property type="gene ID" value="HI_1503"/>
</dbReference>
<dbReference type="KEGG" id="hin:HI_1503"/>
<dbReference type="PATRIC" id="fig|71421.8.peg.1573"/>
<dbReference type="eggNOG" id="COG5005">
    <property type="taxonomic scope" value="Bacteria"/>
</dbReference>
<dbReference type="HOGENOM" id="CLU_117141_3_1_6"/>
<dbReference type="OrthoDB" id="2081253at2"/>
<dbReference type="PhylomeDB" id="O05072"/>
<dbReference type="BioCyc" id="HINF71421:G1GJ1-1527-MONOMER"/>
<dbReference type="Proteomes" id="UP000000579">
    <property type="component" value="Chromosome"/>
</dbReference>
<dbReference type="InterPro" id="IPR006522">
    <property type="entry name" value="Phage_virion_morphogenesis"/>
</dbReference>
<dbReference type="NCBIfam" id="TIGR01635">
    <property type="entry name" value="tail_comp_S"/>
    <property type="match status" value="1"/>
</dbReference>
<dbReference type="Pfam" id="PF05069">
    <property type="entry name" value="Phage_tail_S"/>
    <property type="match status" value="1"/>
</dbReference>
<evidence type="ECO:0000305" key="1"/>
<sequence length="146" mass="16410">MHIEYKFDTSTIQQKFKKLAQVMDGRDITRKVAGVLRQEAEKFFDLEQAPTGEKWEDLDEDYKKYRYAAGHTGKILQIRGGRGLAGSLSLDYGDNYALIGAAEEYGGFHQLGTTFMPARPFLGLGKDGVSEIKAILNRELSELTQE</sequence>
<feature type="chain" id="PRO_0000077683" description="Mu-like prophage FluMu G protein 1">
    <location>
        <begin position="1"/>
        <end position="146"/>
    </location>
</feature>
<gene>
    <name type="ordered locus">HI_1503</name>
</gene>
<protein>
    <recommendedName>
        <fullName>Mu-like prophage FluMu G protein 1</fullName>
    </recommendedName>
</protein>
<keyword id="KW-1185">Reference proteome</keyword>
<reference key="1">
    <citation type="journal article" date="1995" name="Science">
        <title>Whole-genome random sequencing and assembly of Haemophilus influenzae Rd.</title>
        <authorList>
            <person name="Fleischmann R.D."/>
            <person name="Adams M.D."/>
            <person name="White O."/>
            <person name="Clayton R.A."/>
            <person name="Kirkness E.F."/>
            <person name="Kerlavage A.R."/>
            <person name="Bult C.J."/>
            <person name="Tomb J.-F."/>
            <person name="Dougherty B.A."/>
            <person name="Merrick J.M."/>
            <person name="McKenney K."/>
            <person name="Sutton G.G."/>
            <person name="FitzHugh W."/>
            <person name="Fields C.A."/>
            <person name="Gocayne J.D."/>
            <person name="Scott J.D."/>
            <person name="Shirley R."/>
            <person name="Liu L.-I."/>
            <person name="Glodek A."/>
            <person name="Kelley J.M."/>
            <person name="Weidman J.F."/>
            <person name="Phillips C.A."/>
            <person name="Spriggs T."/>
            <person name="Hedblom E."/>
            <person name="Cotton M.D."/>
            <person name="Utterback T.R."/>
            <person name="Hanna M.C."/>
            <person name="Nguyen D.T."/>
            <person name="Saudek D.M."/>
            <person name="Brandon R.C."/>
            <person name="Fine L.D."/>
            <person name="Fritchman J.L."/>
            <person name="Fuhrmann J.L."/>
            <person name="Geoghagen N.S.M."/>
            <person name="Gnehm C.L."/>
            <person name="McDonald L.A."/>
            <person name="Small K.V."/>
            <person name="Fraser C.M."/>
            <person name="Smith H.O."/>
            <person name="Venter J.C."/>
        </authorList>
    </citation>
    <scope>NUCLEOTIDE SEQUENCE [LARGE SCALE GENOMIC DNA]</scope>
    <source>
        <strain>ATCC 51907 / DSM 11121 / KW20 / Rd</strain>
    </source>
</reference>
<proteinExistence type="predicted"/>
<comment type="similarity">
    <text evidence="1">To phage Mu protein G.</text>
</comment>
<name>VPG1_HAEIN</name>